<protein>
    <recommendedName>
        <fullName>Tau/kappa-theraphotoxin-Pc1a</fullName>
        <shortName>Tau/kappa-TRTX-Pc1a</shortName>
    </recommendedName>
    <alternativeName>
        <fullName evidence="3">Vanillotoxin-1</fullName>
        <shortName evidence="3">VaTx1</shortName>
    </alternativeName>
</protein>
<sequence>SECRWFMGGCDSTLDCCKHLSCKMGLYYCAWDGTF</sequence>
<proteinExistence type="evidence at protein level"/>
<accession>P0C244</accession>
<evidence type="ECO:0000250" key="1">
    <source>
        <dbReference type="UniProtKB" id="P60992"/>
    </source>
</evidence>
<evidence type="ECO:0000269" key="2">
    <source>
    </source>
</evidence>
<evidence type="ECO:0000303" key="3">
    <source>
    </source>
</evidence>
<evidence type="ECO:0000305" key="4"/>
<evidence type="ECO:0000305" key="5">
    <source>
    </source>
</evidence>
<comment type="function">
    <text evidence="2">Selectively activates mammalian TRPV1, the capsaicin receptor, a non-selective cation channel expressed by sensory neurons of the pain pathway. Is less potent than VaTx2 and VaTx3. Interacts with distinct regions of the channel than capsaicin, since it only acts on the extracellular face of the channel, and capsaicin binds to the cytosolic side. Also activates avian TRPV1, which is insensitive to capsaicin. Significantly inhibits potassium channels Kv2.1/KCNB1.</text>
</comment>
<comment type="subcellular location">
    <subcellularLocation>
        <location evidence="2">Secreted</location>
    </subcellularLocation>
</comment>
<comment type="tissue specificity">
    <text evidence="5">Expressed by the venom gland.</text>
</comment>
<comment type="domain">
    <text evidence="1">The presence of a 'disulfide through disulfide knot' structurally defines this protein as a knottin.</text>
</comment>
<comment type="mass spectrometry"/>
<comment type="miscellaneous">
    <text evidence="2">Negative results: does not have effect on TRPV2, TRPV3, TRPV4, TRPA1, TRPM8, Kv1.2/KCNA2 and Kv4.2/KCND2.</text>
</comment>
<comment type="similarity">
    <text evidence="4">Belongs to the neurotoxin 10 (Hwtx-1) family. 62 (Vatx) subfamily.</text>
</comment>
<dbReference type="SMR" id="P0C244"/>
<dbReference type="TCDB" id="8.B.5.3.1">
    <property type="family name" value="the na(+)/k(+)/ca(2+) channel targeting tarantula huwentoxin (tht) family"/>
</dbReference>
<dbReference type="ArachnoServer" id="AS000226">
    <property type="toxin name" value="tau/kappa-theraphotoxin-Pc1a"/>
</dbReference>
<dbReference type="GO" id="GO:0005576">
    <property type="term" value="C:extracellular region"/>
    <property type="evidence" value="ECO:0007669"/>
    <property type="project" value="UniProtKB-SubCell"/>
</dbReference>
<dbReference type="GO" id="GO:0008200">
    <property type="term" value="F:ion channel inhibitor activity"/>
    <property type="evidence" value="ECO:0007669"/>
    <property type="project" value="InterPro"/>
</dbReference>
<dbReference type="GO" id="GO:0015459">
    <property type="term" value="F:potassium channel regulator activity"/>
    <property type="evidence" value="ECO:0007669"/>
    <property type="project" value="UniProtKB-KW"/>
</dbReference>
<dbReference type="GO" id="GO:0090729">
    <property type="term" value="F:toxin activity"/>
    <property type="evidence" value="ECO:0007669"/>
    <property type="project" value="UniProtKB-KW"/>
</dbReference>
<dbReference type="InterPro" id="IPR011696">
    <property type="entry name" value="Huwentoxin-1"/>
</dbReference>
<dbReference type="Pfam" id="PF07740">
    <property type="entry name" value="Toxin_12"/>
    <property type="match status" value="1"/>
</dbReference>
<dbReference type="SUPFAM" id="SSF57059">
    <property type="entry name" value="omega toxin-like"/>
    <property type="match status" value="1"/>
</dbReference>
<feature type="chain" id="PRO_0000262451" description="Tau/kappa-theraphotoxin-Pc1a" evidence="2">
    <location>
        <begin position="1"/>
        <end position="35"/>
    </location>
</feature>
<feature type="modified residue" description="Phenylalanine amide" evidence="2">
    <location>
        <position position="35"/>
    </location>
</feature>
<feature type="disulfide bond" evidence="1">
    <location>
        <begin position="3"/>
        <end position="17"/>
    </location>
</feature>
<feature type="disulfide bond" evidence="1">
    <location>
        <begin position="10"/>
        <end position="22"/>
    </location>
</feature>
<feature type="disulfide bond" evidence="1">
    <location>
        <begin position="16"/>
        <end position="29"/>
    </location>
</feature>
<reference key="1">
    <citation type="journal article" date="2006" name="Nature">
        <title>Spider toxins activate the capsaicin receptor to produce inflammatory pain.</title>
        <authorList>
            <person name="Siemens J."/>
            <person name="Zhou S."/>
            <person name="Piskorowski R."/>
            <person name="Nikai T."/>
            <person name="Lumpkin E.A."/>
            <person name="Basbaum A.I."/>
            <person name="King D."/>
            <person name="Julius D."/>
        </authorList>
    </citation>
    <scope>PROTEIN SEQUENCE</scope>
    <scope>FUNCTION</scope>
    <scope>TOXIN TARGET</scope>
    <scope>MASS SPECTROMETRY</scope>
    <scope>SUBCELLULAR LOCATION</scope>
    <scope>AMIDATION AT PHE-35</scope>
    <source>
        <tissue>Venom</tissue>
    </source>
</reference>
<keyword id="KW-0027">Amidation</keyword>
<keyword id="KW-0903">Direct protein sequencing</keyword>
<keyword id="KW-1015">Disulfide bond</keyword>
<keyword id="KW-0872">Ion channel impairing toxin</keyword>
<keyword id="KW-0960">Knottin</keyword>
<keyword id="KW-0528">Neurotoxin</keyword>
<keyword id="KW-0632">Potassium channel impairing toxin</keyword>
<keyword id="KW-0964">Secreted</keyword>
<keyword id="KW-0800">Toxin</keyword>
<keyword id="KW-1220">Voltage-gated potassium channel impairing toxin</keyword>
<organism>
    <name type="scientific">Psalmopoeus cambridgei</name>
    <name type="common">Trinidad chevron tarantula</name>
    <dbReference type="NCBI Taxonomy" id="179874"/>
    <lineage>
        <taxon>Eukaryota</taxon>
        <taxon>Metazoa</taxon>
        <taxon>Ecdysozoa</taxon>
        <taxon>Arthropoda</taxon>
        <taxon>Chelicerata</taxon>
        <taxon>Arachnida</taxon>
        <taxon>Araneae</taxon>
        <taxon>Mygalomorphae</taxon>
        <taxon>Theraphosidae</taxon>
        <taxon>Psalmopoeus</taxon>
    </lineage>
</organism>
<name>TX621_PSACA</name>